<gene>
    <name evidence="1" type="primary">psbF</name>
</gene>
<feature type="chain" id="PRO_0000200400" description="Cytochrome b559 subunit beta">
    <location>
        <begin position="1"/>
        <end position="39"/>
    </location>
</feature>
<feature type="transmembrane region" description="Helical" evidence="1">
    <location>
        <begin position="14"/>
        <end position="30"/>
    </location>
</feature>
<feature type="binding site" description="axial binding residue" evidence="1">
    <location>
        <position position="18"/>
    </location>
    <ligand>
        <name>heme</name>
        <dbReference type="ChEBI" id="CHEBI:30413"/>
        <note>ligand shared with alpha subunit</note>
    </ligand>
    <ligandPart>
        <name>Fe</name>
        <dbReference type="ChEBI" id="CHEBI:18248"/>
    </ligandPart>
</feature>
<comment type="function">
    <text evidence="1">This b-type cytochrome is tightly associated with the reaction center of photosystem II (PSII). PSII is a light-driven water:plastoquinone oxidoreductase that uses light energy to abstract electrons from H(2)O, generating O(2) and a proton gradient subsequently used for ATP formation. It consists of a core antenna complex that captures photons, and an electron transfer chain that converts photonic excitation into a charge separation.</text>
</comment>
<comment type="cofactor">
    <cofactor evidence="1">
        <name>heme b</name>
        <dbReference type="ChEBI" id="CHEBI:60344"/>
    </cofactor>
    <text evidence="1">With its partner (PsbE) binds heme. PSII binds additional chlorophylls, carotenoids and specific lipids.</text>
</comment>
<comment type="subunit">
    <text evidence="1">Heterodimer of an alpha subunit and a beta subunit. PSII is composed of 1 copy each of membrane proteins PsbA, PsbB, PsbC, PsbD, PsbE, PsbF, PsbH, PsbI, PsbJ, PsbK, PsbL, PsbM, PsbT, PsbX, PsbY, PsbZ, Psb30/Ycf12, at least 3 peripheral proteins of the oxygen-evolving complex and a large number of cofactors. It forms dimeric complexes.</text>
</comment>
<comment type="subcellular location">
    <subcellularLocation>
        <location evidence="1">Plastid</location>
        <location evidence="1">Chloroplast thylakoid membrane</location>
        <topology evidence="1">Single-pass membrane protein</topology>
    </subcellularLocation>
</comment>
<comment type="similarity">
    <text evidence="1">Belongs to the PsbE/PsbF family.</text>
</comment>
<proteinExistence type="inferred from homology"/>
<evidence type="ECO:0000255" key="1">
    <source>
        <dbReference type="HAMAP-Rule" id="MF_00643"/>
    </source>
</evidence>
<sequence>MTIDRTYPIFTVRWLAVHGLAVPTVSFLGSISAMQFIQR</sequence>
<dbReference type="EMBL" id="AY007479">
    <property type="protein sequence ID" value="AAG26999.1"/>
    <property type="molecule type" value="Genomic_DNA"/>
</dbReference>
<dbReference type="RefSeq" id="YP_009366856.1">
    <property type="nucleotide sequence ID" value="NC_034702.1"/>
</dbReference>
<dbReference type="SMR" id="Q7HIV0"/>
<dbReference type="GeneID" id="32883760"/>
<dbReference type="GO" id="GO:0009535">
    <property type="term" value="C:chloroplast thylakoid membrane"/>
    <property type="evidence" value="ECO:0007669"/>
    <property type="project" value="UniProtKB-SubCell"/>
</dbReference>
<dbReference type="GO" id="GO:0009539">
    <property type="term" value="C:photosystem II reaction center"/>
    <property type="evidence" value="ECO:0007669"/>
    <property type="project" value="InterPro"/>
</dbReference>
<dbReference type="GO" id="GO:0009055">
    <property type="term" value="F:electron transfer activity"/>
    <property type="evidence" value="ECO:0007669"/>
    <property type="project" value="UniProtKB-UniRule"/>
</dbReference>
<dbReference type="GO" id="GO:0020037">
    <property type="term" value="F:heme binding"/>
    <property type="evidence" value="ECO:0007669"/>
    <property type="project" value="InterPro"/>
</dbReference>
<dbReference type="GO" id="GO:0005506">
    <property type="term" value="F:iron ion binding"/>
    <property type="evidence" value="ECO:0007669"/>
    <property type="project" value="UniProtKB-UniRule"/>
</dbReference>
<dbReference type="GO" id="GO:0009767">
    <property type="term" value="P:photosynthetic electron transport chain"/>
    <property type="evidence" value="ECO:0007669"/>
    <property type="project" value="InterPro"/>
</dbReference>
<dbReference type="HAMAP" id="MF_00643">
    <property type="entry name" value="PSII_PsbF"/>
    <property type="match status" value="1"/>
</dbReference>
<dbReference type="InterPro" id="IPR006241">
    <property type="entry name" value="PSII_cyt_b559_bsu"/>
</dbReference>
<dbReference type="InterPro" id="IPR006216">
    <property type="entry name" value="PSII_cyt_b559_CS"/>
</dbReference>
<dbReference type="InterPro" id="IPR013081">
    <property type="entry name" value="PSII_cyt_b559_N"/>
</dbReference>
<dbReference type="NCBIfam" id="TIGR01333">
    <property type="entry name" value="cyt_b559_beta"/>
    <property type="match status" value="1"/>
</dbReference>
<dbReference type="Pfam" id="PF00283">
    <property type="entry name" value="Cytochrom_B559"/>
    <property type="match status" value="1"/>
</dbReference>
<dbReference type="PIRSF" id="PIRSF000037">
    <property type="entry name" value="PsbF"/>
    <property type="match status" value="1"/>
</dbReference>
<dbReference type="SUPFAM" id="SSF161045">
    <property type="entry name" value="Cytochrome b559 subunits"/>
    <property type="match status" value="1"/>
</dbReference>
<dbReference type="PROSITE" id="PS00537">
    <property type="entry name" value="CYTOCHROME_B559"/>
    <property type="match status" value="1"/>
</dbReference>
<name>PSBF_HYDCA</name>
<organism>
    <name type="scientific">Hydrastis canadensis</name>
    <name type="common">Goldenseal</name>
    <dbReference type="NCBI Taxonomy" id="13569"/>
    <lineage>
        <taxon>Eukaryota</taxon>
        <taxon>Viridiplantae</taxon>
        <taxon>Streptophyta</taxon>
        <taxon>Embryophyta</taxon>
        <taxon>Tracheophyta</taxon>
        <taxon>Spermatophyta</taxon>
        <taxon>Magnoliopsida</taxon>
        <taxon>Ranunculales</taxon>
        <taxon>Ranunculaceae</taxon>
        <taxon>Hydrastidoideae</taxon>
        <taxon>Hydrastis</taxon>
    </lineage>
</organism>
<geneLocation type="chloroplast"/>
<protein>
    <recommendedName>
        <fullName evidence="1">Cytochrome b559 subunit beta</fullName>
    </recommendedName>
    <alternativeName>
        <fullName evidence="1">PSII reaction center subunit VI</fullName>
    </alternativeName>
</protein>
<keyword id="KW-0150">Chloroplast</keyword>
<keyword id="KW-0249">Electron transport</keyword>
<keyword id="KW-0349">Heme</keyword>
<keyword id="KW-0408">Iron</keyword>
<keyword id="KW-0472">Membrane</keyword>
<keyword id="KW-0479">Metal-binding</keyword>
<keyword id="KW-0602">Photosynthesis</keyword>
<keyword id="KW-0604">Photosystem II</keyword>
<keyword id="KW-0934">Plastid</keyword>
<keyword id="KW-0793">Thylakoid</keyword>
<keyword id="KW-0812">Transmembrane</keyword>
<keyword id="KW-1133">Transmembrane helix</keyword>
<keyword id="KW-0813">Transport</keyword>
<reference key="1">
    <citation type="journal article" date="2003" name="Mol. Phylogenet. Evol.">
        <title>Inference of higher-order relationships in the cycads from a large chloroplast data set.</title>
        <authorList>
            <person name="Rai H.S."/>
            <person name="O'Brien H.E."/>
            <person name="Reeves P.A."/>
            <person name="Olmstead R.G."/>
            <person name="Graham S.W."/>
        </authorList>
    </citation>
    <scope>NUCLEOTIDE SEQUENCE [GENOMIC DNA]</scope>
</reference>
<accession>Q7HIV0</accession>